<feature type="chain" id="PRO_0000328053" description="WD repeat-containing protein 53">
    <location>
        <begin position="1"/>
        <end position="358"/>
    </location>
</feature>
<feature type="repeat" description="WD 1">
    <location>
        <begin position="8"/>
        <end position="46"/>
    </location>
</feature>
<feature type="repeat" description="WD 2">
    <location>
        <begin position="92"/>
        <end position="131"/>
    </location>
</feature>
<feature type="repeat" description="WD 3">
    <location>
        <begin position="134"/>
        <end position="174"/>
    </location>
</feature>
<feature type="repeat" description="WD 4">
    <location>
        <begin position="195"/>
        <end position="234"/>
    </location>
</feature>
<feature type="repeat" description="WD 5">
    <location>
        <begin position="239"/>
        <end position="278"/>
    </location>
</feature>
<feature type="region of interest" description="Disordered" evidence="1">
    <location>
        <begin position="278"/>
        <end position="309"/>
    </location>
</feature>
<feature type="compositionally biased region" description="Basic residues" evidence="1">
    <location>
        <begin position="278"/>
        <end position="294"/>
    </location>
</feature>
<dbReference type="EMBL" id="BC109979">
    <property type="protein sequence ID" value="AAI09980.1"/>
    <property type="molecule type" value="mRNA"/>
</dbReference>
<dbReference type="RefSeq" id="NP_001069240.1">
    <property type="nucleotide sequence ID" value="NM_001075772.2"/>
</dbReference>
<dbReference type="RefSeq" id="XP_059740228.1">
    <property type="nucleotide sequence ID" value="XM_059884245.1"/>
</dbReference>
<dbReference type="SMR" id="Q32KQ2"/>
<dbReference type="FunCoup" id="Q32KQ2">
    <property type="interactions" value="3235"/>
</dbReference>
<dbReference type="STRING" id="9913.ENSBTAP00000019520"/>
<dbReference type="PaxDb" id="9913-ENSBTAP00000019520"/>
<dbReference type="Ensembl" id="ENSBTAT00000019520.6">
    <property type="protein sequence ID" value="ENSBTAP00000019520.5"/>
    <property type="gene ID" value="ENSBTAG00000014660.6"/>
</dbReference>
<dbReference type="GeneID" id="518441"/>
<dbReference type="KEGG" id="bta:518441"/>
<dbReference type="CTD" id="348793"/>
<dbReference type="VEuPathDB" id="HostDB:ENSBTAG00000014660"/>
<dbReference type="VGNC" id="VGNC:56335">
    <property type="gene designation" value="WDR53"/>
</dbReference>
<dbReference type="eggNOG" id="ENOG502QQ86">
    <property type="taxonomic scope" value="Eukaryota"/>
</dbReference>
<dbReference type="GeneTree" id="ENSGT00390000011073"/>
<dbReference type="InParanoid" id="Q32KQ2"/>
<dbReference type="OMA" id="GDLMVWG"/>
<dbReference type="OrthoDB" id="2161379at2759"/>
<dbReference type="Proteomes" id="UP000009136">
    <property type="component" value="Chromosome 1"/>
</dbReference>
<dbReference type="Bgee" id="ENSBTAG00000014660">
    <property type="expression patterns" value="Expressed in semen and 104 other cell types or tissues"/>
</dbReference>
<dbReference type="Gene3D" id="2.130.10.10">
    <property type="entry name" value="YVTN repeat-like/Quinoprotein amine dehydrogenase"/>
    <property type="match status" value="2"/>
</dbReference>
<dbReference type="InterPro" id="IPR024977">
    <property type="entry name" value="Apc4-like_WD40_dom"/>
</dbReference>
<dbReference type="InterPro" id="IPR015943">
    <property type="entry name" value="WD40/YVTN_repeat-like_dom_sf"/>
</dbReference>
<dbReference type="InterPro" id="IPR019775">
    <property type="entry name" value="WD40_repeat_CS"/>
</dbReference>
<dbReference type="InterPro" id="IPR036322">
    <property type="entry name" value="WD40_repeat_dom_sf"/>
</dbReference>
<dbReference type="InterPro" id="IPR001680">
    <property type="entry name" value="WD40_rpt"/>
</dbReference>
<dbReference type="InterPro" id="IPR042453">
    <property type="entry name" value="WDR53"/>
</dbReference>
<dbReference type="PANTHER" id="PTHR44666">
    <property type="entry name" value="WD REPEAT-CONTAINING PROTEIN 53"/>
    <property type="match status" value="1"/>
</dbReference>
<dbReference type="PANTHER" id="PTHR44666:SF1">
    <property type="entry name" value="WD REPEAT-CONTAINING PROTEIN 53"/>
    <property type="match status" value="1"/>
</dbReference>
<dbReference type="Pfam" id="PF12894">
    <property type="entry name" value="ANAPC4_WD40"/>
    <property type="match status" value="1"/>
</dbReference>
<dbReference type="Pfam" id="PF00400">
    <property type="entry name" value="WD40"/>
    <property type="match status" value="1"/>
</dbReference>
<dbReference type="SMART" id="SM00320">
    <property type="entry name" value="WD40"/>
    <property type="match status" value="5"/>
</dbReference>
<dbReference type="SUPFAM" id="SSF50978">
    <property type="entry name" value="WD40 repeat-like"/>
    <property type="match status" value="1"/>
</dbReference>
<dbReference type="PROSITE" id="PS00678">
    <property type="entry name" value="WD_REPEATS_1"/>
    <property type="match status" value="2"/>
</dbReference>
<dbReference type="PROSITE" id="PS50082">
    <property type="entry name" value="WD_REPEATS_2"/>
    <property type="match status" value="2"/>
</dbReference>
<dbReference type="PROSITE" id="PS50294">
    <property type="entry name" value="WD_REPEATS_REGION"/>
    <property type="match status" value="1"/>
</dbReference>
<gene>
    <name type="primary">WDR53</name>
</gene>
<organism>
    <name type="scientific">Bos taurus</name>
    <name type="common">Bovine</name>
    <dbReference type="NCBI Taxonomy" id="9913"/>
    <lineage>
        <taxon>Eukaryota</taxon>
        <taxon>Metazoa</taxon>
        <taxon>Chordata</taxon>
        <taxon>Craniata</taxon>
        <taxon>Vertebrata</taxon>
        <taxon>Euteleostomi</taxon>
        <taxon>Mammalia</taxon>
        <taxon>Eutheria</taxon>
        <taxon>Laurasiatheria</taxon>
        <taxon>Artiodactyla</taxon>
        <taxon>Ruminantia</taxon>
        <taxon>Pecora</taxon>
        <taxon>Bovidae</taxon>
        <taxon>Bovinae</taxon>
        <taxon>Bos</taxon>
    </lineage>
</organism>
<comment type="similarity">
    <text evidence="2">Belongs to the WD repeat WDR53 family.</text>
</comment>
<reference key="1">
    <citation type="submission" date="2005-11" db="EMBL/GenBank/DDBJ databases">
        <authorList>
            <consortium name="NIH - Mammalian Gene Collection (MGC) project"/>
        </authorList>
    </citation>
    <scope>NUCLEOTIDE SEQUENCE [LARGE SCALE MRNA]</scope>
    <source>
        <strain>Crossbred X Angus</strain>
        <tissue>Liver</tissue>
    </source>
</reference>
<proteinExistence type="evidence at transcript level"/>
<sequence>MAVKWTGGHSSPILCLNASQEGLVASGAEGGDLVVWGEDGTLLGHTCFQGAEDVTNVLFSPSCPTKLYASHGETISILDVRSLKEPLDDFHVNEEEINCLSLNETENLLASADDSGTIKILDLENKKISRSLKRHSNICSSVAFRPQRPQSLVSCGLDMQVMLWNLRKARPLWITNLQEDETEEMESPQSPGQLLNPALAHSVSVASCGNVFSCGAEDGKVRIFRVMGVKCEQELGFKGHSLGVSQVCFLRESYLLLTGGNDGKIKLWDVSSEIEKKHKSPTKHTHRKKTKRAAYTKQGGGTHASVTGEDEHGKILPKLSIEHGEKVNWLLSTKIKGYRNILVADQTSCISVYPLKEF</sequence>
<protein>
    <recommendedName>
        <fullName>WD repeat-containing protein 53</fullName>
    </recommendedName>
</protein>
<name>WDR53_BOVIN</name>
<evidence type="ECO:0000256" key="1">
    <source>
        <dbReference type="SAM" id="MobiDB-lite"/>
    </source>
</evidence>
<evidence type="ECO:0000305" key="2"/>
<accession>Q32KQ2</accession>
<keyword id="KW-1185">Reference proteome</keyword>
<keyword id="KW-0677">Repeat</keyword>
<keyword id="KW-0853">WD repeat</keyword>